<accession>B1MY28</accession>
<keyword id="KW-0963">Cytoplasm</keyword>
<keyword id="KW-0227">DNA damage</keyword>
<keyword id="KW-0233">DNA recombination</keyword>
<keyword id="KW-0234">DNA repair</keyword>
<keyword id="KW-0255">Endonuclease</keyword>
<keyword id="KW-0378">Hydrolase</keyword>
<keyword id="KW-0460">Magnesium</keyword>
<keyword id="KW-0479">Metal-binding</keyword>
<keyword id="KW-0540">Nuclease</keyword>
<keyword id="KW-1185">Reference proteome</keyword>
<protein>
    <recommendedName>
        <fullName evidence="1">Holliday junction resolvase RecU</fullName>
        <ecNumber evidence="1">3.1.21.10</ecNumber>
    </recommendedName>
    <alternativeName>
        <fullName evidence="1">Recombination protein U homolog</fullName>
    </alternativeName>
</protein>
<comment type="function">
    <text evidence="1">Endonuclease that resolves Holliday junction intermediates in genetic recombination. Cleaves mobile four-strand junctions by introducing symmetrical nicks in paired strands. Promotes annealing of linear ssDNA with homologous dsDNA. Required for DNA repair, homologous recombination and chromosome segregation.</text>
</comment>
<comment type="catalytic activity">
    <reaction evidence="1">
        <text>Endonucleolytic cleavage at a junction such as a reciprocal single-stranded crossover between two homologous DNA duplexes (Holliday junction).</text>
        <dbReference type="EC" id="3.1.21.10"/>
    </reaction>
</comment>
<comment type="cofactor">
    <cofactor evidence="1">
        <name>Mg(2+)</name>
        <dbReference type="ChEBI" id="CHEBI:18420"/>
    </cofactor>
    <text evidence="1">Binds 1 Mg(2+) ion per subunit.</text>
</comment>
<comment type="subcellular location">
    <subcellularLocation>
        <location evidence="1">Cytoplasm</location>
    </subcellularLocation>
</comment>
<comment type="similarity">
    <text evidence="1">Belongs to the RecU family.</text>
</comment>
<name>RECU_LEUCK</name>
<organism>
    <name type="scientific">Leuconostoc citreum (strain KM20)</name>
    <dbReference type="NCBI Taxonomy" id="349519"/>
    <lineage>
        <taxon>Bacteria</taxon>
        <taxon>Bacillati</taxon>
        <taxon>Bacillota</taxon>
        <taxon>Bacilli</taxon>
        <taxon>Lactobacillales</taxon>
        <taxon>Lactobacillaceae</taxon>
        <taxon>Leuconostoc</taxon>
    </lineage>
</organism>
<evidence type="ECO:0000255" key="1">
    <source>
        <dbReference type="HAMAP-Rule" id="MF_00130"/>
    </source>
</evidence>
<evidence type="ECO:0000256" key="2">
    <source>
        <dbReference type="SAM" id="MobiDB-lite"/>
    </source>
</evidence>
<dbReference type="EC" id="3.1.21.10" evidence="1"/>
<dbReference type="EMBL" id="DQ489736">
    <property type="protein sequence ID" value="ACA82430.1"/>
    <property type="molecule type" value="Genomic_DNA"/>
</dbReference>
<dbReference type="RefSeq" id="WP_004903542.1">
    <property type="nucleotide sequence ID" value="NC_010471.1"/>
</dbReference>
<dbReference type="SMR" id="B1MY28"/>
<dbReference type="STRING" id="349519.LCK_00597"/>
<dbReference type="GeneID" id="61102472"/>
<dbReference type="KEGG" id="lci:LCK_00597"/>
<dbReference type="eggNOG" id="COG3331">
    <property type="taxonomic scope" value="Bacteria"/>
</dbReference>
<dbReference type="HOGENOM" id="CLU_096340_0_0_9"/>
<dbReference type="OrthoDB" id="9783592at2"/>
<dbReference type="Proteomes" id="UP000002166">
    <property type="component" value="Chromosome"/>
</dbReference>
<dbReference type="GO" id="GO:0005737">
    <property type="term" value="C:cytoplasm"/>
    <property type="evidence" value="ECO:0007669"/>
    <property type="project" value="UniProtKB-SubCell"/>
</dbReference>
<dbReference type="GO" id="GO:0004519">
    <property type="term" value="F:endonuclease activity"/>
    <property type="evidence" value="ECO:0007669"/>
    <property type="project" value="UniProtKB-UniRule"/>
</dbReference>
<dbReference type="GO" id="GO:0000287">
    <property type="term" value="F:magnesium ion binding"/>
    <property type="evidence" value="ECO:0007669"/>
    <property type="project" value="UniProtKB-UniRule"/>
</dbReference>
<dbReference type="GO" id="GO:0003676">
    <property type="term" value="F:nucleic acid binding"/>
    <property type="evidence" value="ECO:0007669"/>
    <property type="project" value="InterPro"/>
</dbReference>
<dbReference type="GO" id="GO:0007059">
    <property type="term" value="P:chromosome segregation"/>
    <property type="evidence" value="ECO:0007669"/>
    <property type="project" value="UniProtKB-UniRule"/>
</dbReference>
<dbReference type="GO" id="GO:0006310">
    <property type="term" value="P:DNA recombination"/>
    <property type="evidence" value="ECO:0007669"/>
    <property type="project" value="UniProtKB-UniRule"/>
</dbReference>
<dbReference type="GO" id="GO:0006281">
    <property type="term" value="P:DNA repair"/>
    <property type="evidence" value="ECO:0007669"/>
    <property type="project" value="UniProtKB-UniRule"/>
</dbReference>
<dbReference type="CDD" id="cd22354">
    <property type="entry name" value="RecU-like"/>
    <property type="match status" value="1"/>
</dbReference>
<dbReference type="Gene3D" id="3.40.1350.10">
    <property type="match status" value="1"/>
</dbReference>
<dbReference type="HAMAP" id="MF_00130">
    <property type="entry name" value="RecU"/>
    <property type="match status" value="1"/>
</dbReference>
<dbReference type="InterPro" id="IPR004612">
    <property type="entry name" value="Resolv_RecU"/>
</dbReference>
<dbReference type="InterPro" id="IPR011335">
    <property type="entry name" value="Restrct_endonuc-II-like"/>
</dbReference>
<dbReference type="InterPro" id="IPR011856">
    <property type="entry name" value="tRNA_endonuc-like_dom_sf"/>
</dbReference>
<dbReference type="NCBIfam" id="NF002584">
    <property type="entry name" value="PRK02234.1-5"/>
    <property type="match status" value="1"/>
</dbReference>
<dbReference type="NCBIfam" id="TIGR00648">
    <property type="entry name" value="recU"/>
    <property type="match status" value="1"/>
</dbReference>
<dbReference type="Pfam" id="PF03838">
    <property type="entry name" value="RecU"/>
    <property type="match status" value="1"/>
</dbReference>
<dbReference type="PIRSF" id="PIRSF037785">
    <property type="entry name" value="RecU"/>
    <property type="match status" value="1"/>
</dbReference>
<dbReference type="SUPFAM" id="SSF52980">
    <property type="entry name" value="Restriction endonuclease-like"/>
    <property type="match status" value="1"/>
</dbReference>
<reference key="1">
    <citation type="journal article" date="2008" name="J. Bacteriol.">
        <title>Complete genome sequence of Leuconostoc citreum KM20.</title>
        <authorList>
            <person name="Kim J.F."/>
            <person name="Jeong H."/>
            <person name="Lee J.-S."/>
            <person name="Choi S.-H."/>
            <person name="Ha M."/>
            <person name="Hur C.-G."/>
            <person name="Kim J.-S."/>
            <person name="Lee S."/>
            <person name="Park H.-S."/>
            <person name="Park Y.-H."/>
            <person name="Oh T.K."/>
        </authorList>
    </citation>
    <scope>NUCLEOTIDE SEQUENCE [LARGE SCALE GENOMIC DNA]</scope>
    <source>
        <strain>KM20</strain>
    </source>
</reference>
<gene>
    <name evidence="1" type="primary">recU</name>
    <name type="ordered locus">LCK_00597</name>
</gene>
<sequence length="205" mass="23334">MAINYPAGTRRRTAQAKNTMRTGKTTKKALTFGKRGMGLEDEINLANDYYLANHLAVIHKKPTPITIVKVDYPARSAAKITEAYFKQASTTDYNGVYQGRYIDFDAKETKNKTSFPLKNFHEHQIVHLANVLSQNGVGFVIIKFTSLDESYIYPAQALIRQWEKLRGKQSIAYQDIIAEGYRVPESLNPSLDYLKAVDQYFENLN</sequence>
<proteinExistence type="inferred from homology"/>
<feature type="chain" id="PRO_1000095678" description="Holliday junction resolvase RecU">
    <location>
        <begin position="1"/>
        <end position="205"/>
    </location>
</feature>
<feature type="region of interest" description="Disordered" evidence="2">
    <location>
        <begin position="1"/>
        <end position="22"/>
    </location>
</feature>
<feature type="binding site" evidence="1">
    <location>
        <position position="90"/>
    </location>
    <ligand>
        <name>Mg(2+)</name>
        <dbReference type="ChEBI" id="CHEBI:18420"/>
    </ligand>
</feature>
<feature type="binding site" evidence="1">
    <location>
        <position position="92"/>
    </location>
    <ligand>
        <name>Mg(2+)</name>
        <dbReference type="ChEBI" id="CHEBI:18420"/>
    </ligand>
</feature>
<feature type="binding site" evidence="1">
    <location>
        <position position="105"/>
    </location>
    <ligand>
        <name>Mg(2+)</name>
        <dbReference type="ChEBI" id="CHEBI:18420"/>
    </ligand>
</feature>
<feature type="binding site" evidence="1">
    <location>
        <position position="124"/>
    </location>
    <ligand>
        <name>Mg(2+)</name>
        <dbReference type="ChEBI" id="CHEBI:18420"/>
    </ligand>
</feature>
<feature type="site" description="Transition state stabilizer" evidence="1">
    <location>
        <position position="107"/>
    </location>
</feature>